<gene>
    <name type="primary">TDA10</name>
    <name type="ordered locus">YGR205W</name>
    <name type="ORF">G7737</name>
</gene>
<dbReference type="EC" id="2.7.-.-"/>
<dbReference type="EMBL" id="M12878">
    <property type="protein sequence ID" value="AAA66317.1"/>
    <property type="molecule type" value="Genomic_DNA"/>
</dbReference>
<dbReference type="EMBL" id="Z49133">
    <property type="protein sequence ID" value="CAA88998.1"/>
    <property type="molecule type" value="Genomic_DNA"/>
</dbReference>
<dbReference type="EMBL" id="Z72990">
    <property type="protein sequence ID" value="CAA97232.1"/>
    <property type="molecule type" value="Genomic_DNA"/>
</dbReference>
<dbReference type="EMBL" id="AY558273">
    <property type="protein sequence ID" value="AAS56599.1"/>
    <property type="molecule type" value="Genomic_DNA"/>
</dbReference>
<dbReference type="EMBL" id="BK006941">
    <property type="protein sequence ID" value="DAA08299.1"/>
    <property type="molecule type" value="Genomic_DNA"/>
</dbReference>
<dbReference type="PIR" id="B29550">
    <property type="entry name" value="B29550"/>
</dbReference>
<dbReference type="RefSeq" id="NP_011721.3">
    <property type="nucleotide sequence ID" value="NM_001181334.3"/>
</dbReference>
<dbReference type="PDB" id="1ODF">
    <property type="method" value="X-ray"/>
    <property type="resolution" value="2.25 A"/>
    <property type="chains" value="A=1-290"/>
</dbReference>
<dbReference type="PDBsum" id="1ODF"/>
<dbReference type="SMR" id="P42938"/>
<dbReference type="BioGRID" id="33458">
    <property type="interactions" value="24"/>
</dbReference>
<dbReference type="DIP" id="DIP-3866N"/>
<dbReference type="FunCoup" id="P42938">
    <property type="interactions" value="441"/>
</dbReference>
<dbReference type="IntAct" id="P42938">
    <property type="interactions" value="6"/>
</dbReference>
<dbReference type="MINT" id="P42938"/>
<dbReference type="STRING" id="4932.YGR205W"/>
<dbReference type="iPTMnet" id="P42938"/>
<dbReference type="PaxDb" id="4932-YGR205W"/>
<dbReference type="PeptideAtlas" id="P42938"/>
<dbReference type="EnsemblFungi" id="YGR205W_mRNA">
    <property type="protein sequence ID" value="YGR205W"/>
    <property type="gene ID" value="YGR205W"/>
</dbReference>
<dbReference type="GeneID" id="853119"/>
<dbReference type="KEGG" id="sce:YGR205W"/>
<dbReference type="AGR" id="SGD:S000003437"/>
<dbReference type="SGD" id="S000003437">
    <property type="gene designation" value="TDA10"/>
</dbReference>
<dbReference type="VEuPathDB" id="FungiDB:YGR205W"/>
<dbReference type="eggNOG" id="KOG2878">
    <property type="taxonomic scope" value="Eukaryota"/>
</dbReference>
<dbReference type="GeneTree" id="ENSGT01020000230412"/>
<dbReference type="HOGENOM" id="CLU_056986_0_0_1"/>
<dbReference type="InParanoid" id="P42938"/>
<dbReference type="OMA" id="FAGPQHF"/>
<dbReference type="OrthoDB" id="347435at2759"/>
<dbReference type="BioCyc" id="YEAST:G3O-30888-MONOMER"/>
<dbReference type="BRENDA" id="2.7.1.31">
    <property type="organism ID" value="984"/>
</dbReference>
<dbReference type="BioGRID-ORCS" id="853119">
    <property type="hits" value="0 hits in 10 CRISPR screens"/>
</dbReference>
<dbReference type="EvolutionaryTrace" id="P42938"/>
<dbReference type="PRO" id="PR:P42938"/>
<dbReference type="Proteomes" id="UP000002311">
    <property type="component" value="Chromosome VII"/>
</dbReference>
<dbReference type="RNAct" id="P42938">
    <property type="molecule type" value="protein"/>
</dbReference>
<dbReference type="GO" id="GO:0005737">
    <property type="term" value="C:cytoplasm"/>
    <property type="evidence" value="ECO:0007005"/>
    <property type="project" value="SGD"/>
</dbReference>
<dbReference type="GO" id="GO:0005634">
    <property type="term" value="C:nucleus"/>
    <property type="evidence" value="ECO:0007005"/>
    <property type="project" value="SGD"/>
</dbReference>
<dbReference type="GO" id="GO:0005524">
    <property type="term" value="F:ATP binding"/>
    <property type="evidence" value="ECO:0000314"/>
    <property type="project" value="SGD"/>
</dbReference>
<dbReference type="GO" id="GO:0016301">
    <property type="term" value="F:kinase activity"/>
    <property type="evidence" value="ECO:0007669"/>
    <property type="project" value="UniProtKB-KW"/>
</dbReference>
<dbReference type="FunFam" id="3.40.50.300:FF:001691">
    <property type="entry name" value="Probable ATP-dependent kinase TDA10"/>
    <property type="match status" value="1"/>
</dbReference>
<dbReference type="Gene3D" id="3.40.50.300">
    <property type="entry name" value="P-loop containing nucleotide triphosphate hydrolases"/>
    <property type="match status" value="1"/>
</dbReference>
<dbReference type="InterPro" id="IPR027417">
    <property type="entry name" value="P-loop_NTPase"/>
</dbReference>
<dbReference type="SUPFAM" id="SSF52540">
    <property type="entry name" value="P-loop containing nucleoside triphosphate hydrolases"/>
    <property type="match status" value="1"/>
</dbReference>
<proteinExistence type="evidence at protein level"/>
<reference key="1">
    <citation type="journal article" date="1986" name="J. Biol. Chem.">
        <title>Nucleotide sequence of the Saccharomyces cerevisiae ADE3 gene encoding C1-tetrahydrofolate synthase.</title>
        <authorList>
            <person name="Staben C."/>
            <person name="Rabinowitz J.C."/>
        </authorList>
    </citation>
    <scope>NUCLEOTIDE SEQUENCE [GENOMIC DNA]</scope>
</reference>
<reference key="2">
    <citation type="journal article" date="1996" name="Yeast">
        <title>Sequencing of a 17.6 kb segment on the right arm of yeast chromosome VII reveals 12 ORFs, including CCT, ADE3 and TR-I genes, homologues of the yeast PMT and EF1G genes, of the human and bacterial electron-transferring flavoproteins (beta-chain) and of the Escherichia coli phosphoserine phosphohydrolase, and five new ORFs.</title>
        <authorList>
            <person name="Guerreiro P."/>
            <person name="Barreiros T."/>
            <person name="Soares H."/>
            <person name="Cyrne L."/>
            <person name="Maia e Silva A."/>
            <person name="Rodrigues-Pousada C."/>
        </authorList>
    </citation>
    <scope>NUCLEOTIDE SEQUENCE [GENOMIC DNA]</scope>
    <source>
        <strain>ATCC 204508 / S288c</strain>
    </source>
</reference>
<reference key="3">
    <citation type="journal article" date="1997" name="Nature">
        <title>The nucleotide sequence of Saccharomyces cerevisiae chromosome VII.</title>
        <authorList>
            <person name="Tettelin H."/>
            <person name="Agostoni-Carbone M.L."/>
            <person name="Albermann K."/>
            <person name="Albers M."/>
            <person name="Arroyo J."/>
            <person name="Backes U."/>
            <person name="Barreiros T."/>
            <person name="Bertani I."/>
            <person name="Bjourson A.J."/>
            <person name="Brueckner M."/>
            <person name="Bruschi C.V."/>
            <person name="Carignani G."/>
            <person name="Castagnoli L."/>
            <person name="Cerdan E."/>
            <person name="Clemente M.L."/>
            <person name="Coblenz A."/>
            <person name="Coglievina M."/>
            <person name="Coissac E."/>
            <person name="Defoor E."/>
            <person name="Del Bino S."/>
            <person name="Delius H."/>
            <person name="Delneri D."/>
            <person name="de Wergifosse P."/>
            <person name="Dujon B."/>
            <person name="Durand P."/>
            <person name="Entian K.-D."/>
            <person name="Eraso P."/>
            <person name="Escribano V."/>
            <person name="Fabiani L."/>
            <person name="Fartmann B."/>
            <person name="Feroli F."/>
            <person name="Feuermann M."/>
            <person name="Frontali L."/>
            <person name="Garcia-Gonzalez M."/>
            <person name="Garcia-Saez M.I."/>
            <person name="Goffeau A."/>
            <person name="Guerreiro P."/>
            <person name="Hani J."/>
            <person name="Hansen M."/>
            <person name="Hebling U."/>
            <person name="Hernandez K."/>
            <person name="Heumann K."/>
            <person name="Hilger F."/>
            <person name="Hofmann B."/>
            <person name="Indge K.J."/>
            <person name="James C.M."/>
            <person name="Klima R."/>
            <person name="Koetter P."/>
            <person name="Kramer B."/>
            <person name="Kramer W."/>
            <person name="Lauquin G."/>
            <person name="Leuther H."/>
            <person name="Louis E.J."/>
            <person name="Maillier E."/>
            <person name="Marconi A."/>
            <person name="Martegani E."/>
            <person name="Mazon M.J."/>
            <person name="Mazzoni C."/>
            <person name="McReynolds A.D.K."/>
            <person name="Melchioretto P."/>
            <person name="Mewes H.-W."/>
            <person name="Minenkova O."/>
            <person name="Mueller-Auer S."/>
            <person name="Nawrocki A."/>
            <person name="Netter P."/>
            <person name="Neu R."/>
            <person name="Nombela C."/>
            <person name="Oliver S.G."/>
            <person name="Panzeri L."/>
            <person name="Paoluzi S."/>
            <person name="Plevani P."/>
            <person name="Portetelle D."/>
            <person name="Portillo F."/>
            <person name="Potier S."/>
            <person name="Purnelle B."/>
            <person name="Rieger M."/>
            <person name="Riles L."/>
            <person name="Rinaldi T."/>
            <person name="Robben J."/>
            <person name="Rodrigues-Pousada C."/>
            <person name="Rodriguez-Belmonte E."/>
            <person name="Rodriguez-Torres A.M."/>
            <person name="Rose M."/>
            <person name="Ruzzi M."/>
            <person name="Saliola M."/>
            <person name="Sanchez-Perez M."/>
            <person name="Schaefer B."/>
            <person name="Schaefer M."/>
            <person name="Scharfe M."/>
            <person name="Schmidheini T."/>
            <person name="Schreer A."/>
            <person name="Skala J."/>
            <person name="Souciet J.-L."/>
            <person name="Steensma H.Y."/>
            <person name="Talla E."/>
            <person name="Thierry A."/>
            <person name="Vandenbol M."/>
            <person name="van der Aart Q.J.M."/>
            <person name="Van Dyck L."/>
            <person name="Vanoni M."/>
            <person name="Verhasselt P."/>
            <person name="Voet M."/>
            <person name="Volckaert G."/>
            <person name="Wambutt R."/>
            <person name="Watson M.D."/>
            <person name="Weber N."/>
            <person name="Wedler E."/>
            <person name="Wedler H."/>
            <person name="Wipfli P."/>
            <person name="Wolf K."/>
            <person name="Wright L.F."/>
            <person name="Zaccaria P."/>
            <person name="Zimmermann M."/>
            <person name="Zollner A."/>
            <person name="Kleine K."/>
        </authorList>
    </citation>
    <scope>NUCLEOTIDE SEQUENCE [LARGE SCALE GENOMIC DNA]</scope>
    <source>
        <strain>ATCC 204508 / S288c</strain>
    </source>
</reference>
<reference key="4">
    <citation type="journal article" date="2014" name="G3 (Bethesda)">
        <title>The reference genome sequence of Saccharomyces cerevisiae: Then and now.</title>
        <authorList>
            <person name="Engel S.R."/>
            <person name="Dietrich F.S."/>
            <person name="Fisk D.G."/>
            <person name="Binkley G."/>
            <person name="Balakrishnan R."/>
            <person name="Costanzo M.C."/>
            <person name="Dwight S.S."/>
            <person name="Hitz B.C."/>
            <person name="Karra K."/>
            <person name="Nash R.S."/>
            <person name="Weng S."/>
            <person name="Wong E.D."/>
            <person name="Lloyd P."/>
            <person name="Skrzypek M.S."/>
            <person name="Miyasato S.R."/>
            <person name="Simison M."/>
            <person name="Cherry J.M."/>
        </authorList>
    </citation>
    <scope>GENOME REANNOTATION</scope>
    <source>
        <strain>ATCC 204508 / S288c</strain>
    </source>
</reference>
<reference key="5">
    <citation type="journal article" date="2007" name="Genome Res.">
        <title>Approaching a complete repository of sequence-verified protein-encoding clones for Saccharomyces cerevisiae.</title>
        <authorList>
            <person name="Hu Y."/>
            <person name="Rolfs A."/>
            <person name="Bhullar B."/>
            <person name="Murthy T.V.S."/>
            <person name="Zhu C."/>
            <person name="Berger M.F."/>
            <person name="Camargo A.A."/>
            <person name="Kelley F."/>
            <person name="McCarron S."/>
            <person name="Jepson D."/>
            <person name="Richardson A."/>
            <person name="Raphael J."/>
            <person name="Moreira D."/>
            <person name="Taycher E."/>
            <person name="Zuo D."/>
            <person name="Mohr S."/>
            <person name="Kane M.F."/>
            <person name="Williamson J."/>
            <person name="Simpson A.J.G."/>
            <person name="Bulyk M.L."/>
            <person name="Harlow E."/>
            <person name="Marsischky G."/>
            <person name="Kolodner R.D."/>
            <person name="LaBaer J."/>
        </authorList>
    </citation>
    <scope>NUCLEOTIDE SEQUENCE [GENOMIC DNA]</scope>
    <source>
        <strain>ATCC 204508 / S288c</strain>
    </source>
</reference>
<reference key="6">
    <citation type="journal article" date="2003" name="Nature">
        <title>Global analysis of protein localization in budding yeast.</title>
        <authorList>
            <person name="Huh W.-K."/>
            <person name="Falvo J.V."/>
            <person name="Gerke L.C."/>
            <person name="Carroll A.S."/>
            <person name="Howson R.W."/>
            <person name="Weissman J.S."/>
            <person name="O'Shea E.K."/>
        </authorList>
    </citation>
    <scope>SUBCELLULAR LOCATION [LARGE SCALE ANALYSIS]</scope>
</reference>
<reference key="7">
    <citation type="journal article" date="2003" name="Nature">
        <title>Global analysis of protein expression in yeast.</title>
        <authorList>
            <person name="Ghaemmaghami S."/>
            <person name="Huh W.-K."/>
            <person name="Bower K."/>
            <person name="Howson R.W."/>
            <person name="Belle A."/>
            <person name="Dephoure N."/>
            <person name="O'Shea E.K."/>
            <person name="Weissman J.S."/>
        </authorList>
    </citation>
    <scope>LEVEL OF PROTEIN EXPRESSION [LARGE SCALE ANALYSIS]</scope>
</reference>
<reference key="8">
    <citation type="journal article" date="2011" name="Genome Res.">
        <title>Selective ploidy ablation, a high-throughput plasmid transfer protocol, identifies new genes affecting topoisomerase I-induced DNA damage.</title>
        <authorList>
            <person name="Reid R.J."/>
            <person name="Gonzalez-Barrera S."/>
            <person name="Sunjevaric I."/>
            <person name="Alvaro D."/>
            <person name="Ciccone S."/>
            <person name="Wagner M."/>
            <person name="Rothstein R."/>
        </authorList>
    </citation>
    <scope>DISRUPTION PHENOTYPE</scope>
</reference>
<reference key="9">
    <citation type="journal article" date="2004" name="Proteins">
        <title>Crystal structure of the YGR205w protein from Saccharomyces cerevisiae: close structural resemblance to E. coli pantothenate kinase.</title>
        <authorList>
            <person name="de La Sierra-Gallay I.L."/>
            <person name="Collinet B."/>
            <person name="Graille M."/>
            <person name="Quevillon-Cheruel S."/>
            <person name="Liger D."/>
            <person name="Minard P."/>
            <person name="Blondeau K."/>
            <person name="Henckes G."/>
            <person name="Aufrere R."/>
            <person name="Leulliot N."/>
            <person name="Zhou C.Z."/>
            <person name="Sorel I."/>
            <person name="Ferrer J.L."/>
            <person name="Poupon A."/>
            <person name="Janin J."/>
            <person name="van Tilbeurgh H."/>
        </authorList>
    </citation>
    <scope>X-RAY CRYSTALLOGRAPHY (2.25 ANGSTROMS)</scope>
    <scope>ATP-BINDING</scope>
</reference>
<organism>
    <name type="scientific">Saccharomyces cerevisiae (strain ATCC 204508 / S288c)</name>
    <name type="common">Baker's yeast</name>
    <dbReference type="NCBI Taxonomy" id="559292"/>
    <lineage>
        <taxon>Eukaryota</taxon>
        <taxon>Fungi</taxon>
        <taxon>Dikarya</taxon>
        <taxon>Ascomycota</taxon>
        <taxon>Saccharomycotina</taxon>
        <taxon>Saccharomycetes</taxon>
        <taxon>Saccharomycetales</taxon>
        <taxon>Saccharomycetaceae</taxon>
        <taxon>Saccharomyces</taxon>
    </lineage>
</organism>
<name>TDA10_YEAST</name>
<feature type="chain" id="PRO_0000214076" description="Probable ATP-dependent kinase TDA10">
    <location>
        <begin position="1"/>
        <end position="290"/>
    </location>
</feature>
<feature type="binding site" evidence="1">
    <location>
        <begin position="38"/>
        <end position="45"/>
    </location>
    <ligand>
        <name>ATP</name>
        <dbReference type="ChEBI" id="CHEBI:30616"/>
    </ligand>
</feature>
<feature type="helix" evidence="6">
    <location>
        <begin position="8"/>
        <end position="24"/>
    </location>
</feature>
<feature type="turn" evidence="6">
    <location>
        <begin position="25"/>
        <end position="27"/>
    </location>
</feature>
<feature type="strand" evidence="6">
    <location>
        <begin position="32"/>
        <end position="37"/>
    </location>
</feature>
<feature type="helix" evidence="6">
    <location>
        <begin position="44"/>
        <end position="59"/>
    </location>
</feature>
<feature type="helix" evidence="6">
    <location>
        <begin position="60"/>
        <end position="62"/>
    </location>
</feature>
<feature type="strand" evidence="6">
    <location>
        <begin position="65"/>
        <end position="69"/>
    </location>
</feature>
<feature type="helix" evidence="6">
    <location>
        <begin position="70"/>
        <end position="73"/>
    </location>
</feature>
<feature type="helix" evidence="6">
    <location>
        <begin position="77"/>
        <end position="86"/>
    </location>
</feature>
<feature type="turn" evidence="6">
    <location>
        <begin position="87"/>
        <end position="89"/>
    </location>
</feature>
<feature type="helix" evidence="6">
    <location>
        <begin position="91"/>
        <end position="93"/>
    </location>
</feature>
<feature type="strand" evidence="6">
    <location>
        <begin position="94"/>
        <end position="96"/>
    </location>
</feature>
<feature type="helix" evidence="6">
    <location>
        <begin position="104"/>
        <end position="114"/>
    </location>
</feature>
<feature type="strand" evidence="6">
    <location>
        <begin position="125"/>
        <end position="128"/>
    </location>
</feature>
<feature type="turn" evidence="6">
    <location>
        <begin position="133"/>
        <end position="135"/>
    </location>
</feature>
<feature type="helix" evidence="6">
    <location>
        <begin position="136"/>
        <end position="138"/>
    </location>
</feature>
<feature type="strand" evidence="6">
    <location>
        <begin position="147"/>
        <end position="152"/>
    </location>
</feature>
<feature type="strand" evidence="6">
    <location>
        <begin position="154"/>
        <end position="162"/>
    </location>
</feature>
<feature type="turn" evidence="6">
    <location>
        <begin position="172"/>
        <end position="174"/>
    </location>
</feature>
<feature type="strand" evidence="6">
    <location>
        <begin position="176"/>
        <end position="178"/>
    </location>
</feature>
<feature type="helix" evidence="6">
    <location>
        <begin position="182"/>
        <end position="195"/>
    </location>
</feature>
<feature type="turn" evidence="6">
    <location>
        <begin position="196"/>
        <end position="198"/>
    </location>
</feature>
<feature type="strand" evidence="6">
    <location>
        <begin position="204"/>
        <end position="212"/>
    </location>
</feature>
<feature type="helix" evidence="6">
    <location>
        <begin position="216"/>
        <end position="232"/>
    </location>
</feature>
<feature type="helix" evidence="6">
    <location>
        <begin position="238"/>
        <end position="246"/>
    </location>
</feature>
<feature type="helix" evidence="6">
    <location>
        <begin position="249"/>
        <end position="262"/>
    </location>
</feature>
<feature type="strand" evidence="6">
    <location>
        <begin position="265"/>
        <end position="275"/>
    </location>
</feature>
<feature type="strand" evidence="6">
    <location>
        <begin position="281"/>
        <end position="287"/>
    </location>
</feature>
<accession>P42938</accession>
<accession>D6VUY8</accession>
<protein>
    <recommendedName>
        <fullName>Probable ATP-dependent kinase TDA10</fullName>
        <ecNumber>2.7.-.-</ecNumber>
    </recommendedName>
    <alternativeName>
        <fullName>Topoisomerase I damage affected protein 10</fullName>
    </alternativeName>
</protein>
<keyword id="KW-0002">3D-structure</keyword>
<keyword id="KW-0067">ATP-binding</keyword>
<keyword id="KW-0963">Cytoplasm</keyword>
<keyword id="KW-0418">Kinase</keyword>
<keyword id="KW-0547">Nucleotide-binding</keyword>
<keyword id="KW-0539">Nucleus</keyword>
<keyword id="KW-1185">Reference proteome</keyword>
<keyword id="KW-0808">Transferase</keyword>
<sequence>MCDKSKTVLDYTIEFLDKYIPEWFETGNKCPLFIFFSGPQGSGKSFTSIQIYNHLMEKYGGEKSIGYASIDDFYLTHEDQLKLNEQFKNNKLLQGRGLPGTHDMKLLQEVLNTIFNNNEHPDQDTVVLPKYDKSQFKGEGDRCPTGQKIKLPVDIFILEGWFLGFNPILQGIENNDLLTGDMVDVNAKLFFYSDLLWRNPEIKSLGIVFTTDNINNVYGWRLQQEHELISKVGKGMTDEQVHAFVDRYMPSYKLYLNDFVRSESLGSIATLTLGIDSNRNVYSTKTRCIE</sequence>
<evidence type="ECO:0000255" key="1"/>
<evidence type="ECO:0000269" key="2">
    <source>
    </source>
</evidence>
<evidence type="ECO:0000269" key="3">
    <source>
    </source>
</evidence>
<evidence type="ECO:0000269" key="4">
    <source>
    </source>
</evidence>
<evidence type="ECO:0000305" key="5"/>
<evidence type="ECO:0007829" key="6">
    <source>
        <dbReference type="PDB" id="1ODF"/>
    </source>
</evidence>
<comment type="function">
    <text>ATP-dependent kinase whose specificity is not yet known.</text>
</comment>
<comment type="interaction">
    <interactant intactId="EBI-23474">
        <id>P42938</id>
    </interactant>
    <interactant intactId="EBI-12805">
        <id>P34221</id>
        <label>PTC3</label>
    </interactant>
    <organismsDiffer>false</organismsDiffer>
    <experiments>3</experiments>
</comment>
<comment type="subcellular location">
    <subcellularLocation>
        <location evidence="2">Cytoplasm</location>
    </subcellularLocation>
    <subcellularLocation>
        <location evidence="2">Nucleus</location>
    </subcellularLocation>
</comment>
<comment type="disruption phenotype">
    <text evidence="4">Leads to cell death when overexpressing the camptothecin mimetic TOP1-T(722)A mutant.</text>
</comment>
<comment type="miscellaneous">
    <text evidence="3">Present with 4280 molecules/cell in log phase SD medium.</text>
</comment>
<comment type="similarity">
    <text evidence="5">Belongs to the GLYK kinase family.</text>
</comment>